<dbReference type="EMBL" id="BC074405">
    <property type="protein sequence ID" value="AAH74405.1"/>
    <property type="molecule type" value="mRNA"/>
</dbReference>
<dbReference type="RefSeq" id="NP_001086267.1">
    <property type="nucleotide sequence ID" value="NM_001092798.1"/>
</dbReference>
<dbReference type="SMR" id="Q6GLQ4"/>
<dbReference type="DNASU" id="444696"/>
<dbReference type="GeneID" id="444696"/>
<dbReference type="KEGG" id="xla:444696"/>
<dbReference type="AGR" id="Xenbase:XB-GENE-6254587"/>
<dbReference type="CTD" id="444696"/>
<dbReference type="Xenbase" id="XB-GENE-6254587">
    <property type="gene designation" value="ppp1r10.S"/>
</dbReference>
<dbReference type="OrthoDB" id="2138378at2759"/>
<dbReference type="Proteomes" id="UP000186698">
    <property type="component" value="Chromosome 8S"/>
</dbReference>
<dbReference type="Bgee" id="444696">
    <property type="expression patterns" value="Expressed in gastrula and 19 other cell types or tissues"/>
</dbReference>
<dbReference type="GO" id="GO:0000785">
    <property type="term" value="C:chromatin"/>
    <property type="evidence" value="ECO:0000250"/>
    <property type="project" value="UniProtKB"/>
</dbReference>
<dbReference type="GO" id="GO:0005634">
    <property type="term" value="C:nucleus"/>
    <property type="evidence" value="ECO:0007669"/>
    <property type="project" value="UniProtKB-SubCell"/>
</dbReference>
<dbReference type="GO" id="GO:0072357">
    <property type="term" value="C:PTW/PP1 phosphatase complex"/>
    <property type="evidence" value="ECO:0000250"/>
    <property type="project" value="UniProtKB"/>
</dbReference>
<dbReference type="GO" id="GO:0140767">
    <property type="term" value="F:enzyme-substrate adaptor activity"/>
    <property type="evidence" value="ECO:0000250"/>
    <property type="project" value="UniProtKB"/>
</dbReference>
<dbReference type="GO" id="GO:0008157">
    <property type="term" value="F:protein phosphatase 1 binding"/>
    <property type="evidence" value="ECO:0000318"/>
    <property type="project" value="GO_Central"/>
</dbReference>
<dbReference type="GO" id="GO:0004864">
    <property type="term" value="F:protein phosphatase inhibitor activity"/>
    <property type="evidence" value="ECO:0007669"/>
    <property type="project" value="UniProtKB-KW"/>
</dbReference>
<dbReference type="GO" id="GO:0019888">
    <property type="term" value="F:protein phosphatase regulator activity"/>
    <property type="evidence" value="ECO:0000250"/>
    <property type="project" value="UniProtKB"/>
</dbReference>
<dbReference type="GO" id="GO:0008270">
    <property type="term" value="F:zinc ion binding"/>
    <property type="evidence" value="ECO:0007669"/>
    <property type="project" value="UniProtKB-KW"/>
</dbReference>
<dbReference type="GO" id="GO:0034244">
    <property type="term" value="P:negative regulation of transcription elongation by RNA polymerase II"/>
    <property type="evidence" value="ECO:0000250"/>
    <property type="project" value="UniProtKB"/>
</dbReference>
<dbReference type="GO" id="GO:2000806">
    <property type="term" value="P:positive regulation of termination of RNA polymerase II transcription, poly(A)-coupled"/>
    <property type="evidence" value="ECO:0000250"/>
    <property type="project" value="UniProtKB"/>
</dbReference>
<dbReference type="GO" id="GO:0032968">
    <property type="term" value="P:positive regulation of transcription elongation by RNA polymerase II"/>
    <property type="evidence" value="ECO:0000250"/>
    <property type="project" value="UniProtKB"/>
</dbReference>
<dbReference type="GO" id="GO:0001111">
    <property type="term" value="P:RNA polymerase II promoter clearance"/>
    <property type="evidence" value="ECO:0000250"/>
    <property type="project" value="UniProtKB"/>
</dbReference>
<dbReference type="CDD" id="cd00183">
    <property type="entry name" value="TFIIS_I"/>
    <property type="match status" value="1"/>
</dbReference>
<dbReference type="Gene3D" id="1.20.930.10">
    <property type="entry name" value="Conserved domain common to transcription factors TFIIS, elongin A, CRSP70"/>
    <property type="match status" value="1"/>
</dbReference>
<dbReference type="InterPro" id="IPR003617">
    <property type="entry name" value="TFIIS/CRSP70_N_sub"/>
</dbReference>
<dbReference type="InterPro" id="IPR035441">
    <property type="entry name" value="TFIIS/LEDGF_dom_sf"/>
</dbReference>
<dbReference type="InterPro" id="IPR017923">
    <property type="entry name" value="TFIIS_N"/>
</dbReference>
<dbReference type="InterPro" id="IPR000571">
    <property type="entry name" value="Znf_CCCH"/>
</dbReference>
<dbReference type="PANTHER" id="PTHR46557">
    <property type="entry name" value="SERINE/THREONINE-PROTEIN PHOSPHATASE 1 REGULATORY SUBUNIT 10-RELATED"/>
    <property type="match status" value="1"/>
</dbReference>
<dbReference type="PANTHER" id="PTHR46557:SF1">
    <property type="entry name" value="SERINE_THREONINE-PROTEIN PHOSPHATASE 1 REGULATORY SUBUNIT 10"/>
    <property type="match status" value="1"/>
</dbReference>
<dbReference type="Pfam" id="PF08711">
    <property type="entry name" value="Med26"/>
    <property type="match status" value="1"/>
</dbReference>
<dbReference type="Pfam" id="PF00642">
    <property type="entry name" value="zf-CCCH"/>
    <property type="match status" value="1"/>
</dbReference>
<dbReference type="SMART" id="SM00509">
    <property type="entry name" value="TFS2N"/>
    <property type="match status" value="1"/>
</dbReference>
<dbReference type="SMART" id="SM00356">
    <property type="entry name" value="ZnF_C3H1"/>
    <property type="match status" value="1"/>
</dbReference>
<dbReference type="SUPFAM" id="SSF47676">
    <property type="entry name" value="Conserved domain common to transcription factors TFIIS, elongin A, CRSP70"/>
    <property type="match status" value="1"/>
</dbReference>
<dbReference type="PROSITE" id="PS51319">
    <property type="entry name" value="TFIIS_N"/>
    <property type="match status" value="1"/>
</dbReference>
<dbReference type="PROSITE" id="PS50103">
    <property type="entry name" value="ZF_C3H1"/>
    <property type="match status" value="1"/>
</dbReference>
<protein>
    <recommendedName>
        <fullName>Serine/threonine-protein phosphatase 1 regulatory subunit 10</fullName>
    </recommendedName>
</protein>
<feature type="chain" id="PRO_0000071516" description="Serine/threonine-protein phosphatase 1 regulatory subunit 10">
    <location>
        <begin position="1"/>
        <end position="819"/>
    </location>
</feature>
<feature type="domain" description="TFIIS N-terminal" evidence="3">
    <location>
        <begin position="73"/>
        <end position="147"/>
    </location>
</feature>
<feature type="zinc finger region" description="C3H1-type" evidence="4">
    <location>
        <begin position="785"/>
        <end position="813"/>
    </location>
</feature>
<feature type="region of interest" description="Disordered" evidence="5">
    <location>
        <begin position="151"/>
        <end position="204"/>
    </location>
</feature>
<feature type="region of interest" description="Disordered" evidence="5">
    <location>
        <begin position="296"/>
        <end position="391"/>
    </location>
</feature>
<feature type="region of interest" description="Disordered" evidence="5">
    <location>
        <begin position="495"/>
        <end position="785"/>
    </location>
</feature>
<feature type="short sequence motif" description="PP1-binding motif" evidence="1">
    <location>
        <begin position="386"/>
        <end position="415"/>
    </location>
</feature>
<feature type="compositionally biased region" description="Basic and acidic residues" evidence="5">
    <location>
        <begin position="153"/>
        <end position="165"/>
    </location>
</feature>
<feature type="compositionally biased region" description="Basic and acidic residues" evidence="5">
    <location>
        <begin position="173"/>
        <end position="190"/>
    </location>
</feature>
<feature type="compositionally biased region" description="Polar residues" evidence="5">
    <location>
        <begin position="305"/>
        <end position="327"/>
    </location>
</feature>
<feature type="compositionally biased region" description="Basic and acidic residues" evidence="5">
    <location>
        <begin position="495"/>
        <end position="504"/>
    </location>
</feature>
<feature type="compositionally biased region" description="Polar residues" evidence="5">
    <location>
        <begin position="533"/>
        <end position="543"/>
    </location>
</feature>
<feature type="compositionally biased region" description="Polar residues" evidence="5">
    <location>
        <begin position="560"/>
        <end position="578"/>
    </location>
</feature>
<feature type="compositionally biased region" description="Basic and acidic residues" evidence="5">
    <location>
        <begin position="589"/>
        <end position="604"/>
    </location>
</feature>
<feature type="compositionally biased region" description="Low complexity" evidence="5">
    <location>
        <begin position="606"/>
        <end position="618"/>
    </location>
</feature>
<feature type="compositionally biased region" description="Pro residues" evidence="5">
    <location>
        <begin position="635"/>
        <end position="663"/>
    </location>
</feature>
<feature type="compositionally biased region" description="Pro residues" evidence="5">
    <location>
        <begin position="670"/>
        <end position="695"/>
    </location>
</feature>
<feature type="compositionally biased region" description="Basic and acidic residues" evidence="5">
    <location>
        <begin position="704"/>
        <end position="715"/>
    </location>
</feature>
<feature type="compositionally biased region" description="Basic and acidic residues" evidence="5">
    <location>
        <begin position="758"/>
        <end position="777"/>
    </location>
</feature>
<reference key="1">
    <citation type="submission" date="2004-06" db="EMBL/GenBank/DDBJ databases">
        <authorList>
            <consortium name="NIH - Xenopus Gene Collection (XGC) project"/>
        </authorList>
    </citation>
    <scope>NUCLEOTIDE SEQUENCE [LARGE SCALE MRNA]</scope>
    <source>
        <tissue>Brain</tissue>
    </source>
</reference>
<sequence>MGSGPIDPLELLKGLDNILGQGGEVKALEGMAKIFNLMKQSQKMVNRCIYLNIVLQTHSPDILSKFIRVGGYKLLNNWLTYARTCNNSPLLHQILLTLQHLPLTVDHLKQNNTAKLVKQLSKSSEDEELRKLAGILVNDWMAVIRSQTNIQPADKEKKKKKEDAKGSSPVLDKTSEAKSEDNGDKKEKPKIQRTTAPSHAKFRSTGLEVEASSLVPVKKPTPVPVLSDKYLKPVPVKRQSSVPVPGDAAPAEKKYKPLNIVPNTTKEIKVKIIPPQPIESLGFLDALNSAPVPGIKIKKKKKAVSPTSNKASPFDSKSPTEASSLTKPSSPEPEPPVEGMEVERPGTPVPAIELPEPMEISAPPPPAPSETKPSEADASQLTKKGKKRKTVSWPEESRLREYFYFELDETERVNVNKIKDFGEAAKREMLKDRQAFQNARRHSHDTMEEVIPWVLPRLLNLPGALVQMGSNSTEKHAQAEREMGILQEIFLSKESVPDTPHEPDPESYEPSPPKLIPLDEDCSMDDGVYPESMDQSTESQSPDLNGAKLPPVLANLMGSMGSSKSPPNTLPGTMQEILTSIMGAQGNAKPEDLMKQPDFSEKIKHLLGSLQNQNQNQGPPGPAGQGSQGPVNIGFPPPSQKNHQPPPPHHQPPPPHYPPPGPNGPFQGPHGPPGGPRMMGPPPPQRDGYWEPPPNENLRGGSHHGGERGGMRGGDRGPPPPPFHRNRGGRGGEPGYRGRGRGGERGHPGRNGPYGMGHGDHRGHEGHRGHGGHGDHRGHGHGGDMSTRPTCRHFMMKGNCRYENNCAFYHPGINGPPLP</sequence>
<keyword id="KW-0158">Chromosome</keyword>
<keyword id="KW-0479">Metal-binding</keyword>
<keyword id="KW-0539">Nucleus</keyword>
<keyword id="KW-1185">Reference proteome</keyword>
<keyword id="KW-0862">Zinc</keyword>
<keyword id="KW-0863">Zinc-finger</keyword>
<gene>
    <name type="primary">ppp1r10</name>
</gene>
<accession>Q6GLQ4</accession>
<evidence type="ECO:0000250" key="1">
    <source>
        <dbReference type="UniProtKB" id="O55000"/>
    </source>
</evidence>
<evidence type="ECO:0000250" key="2">
    <source>
        <dbReference type="UniProtKB" id="Q96QC0"/>
    </source>
</evidence>
<evidence type="ECO:0000255" key="3">
    <source>
        <dbReference type="PROSITE-ProRule" id="PRU00649"/>
    </source>
</evidence>
<evidence type="ECO:0000255" key="4">
    <source>
        <dbReference type="PROSITE-ProRule" id="PRU00723"/>
    </source>
</evidence>
<evidence type="ECO:0000256" key="5">
    <source>
        <dbReference type="SAM" id="MobiDB-lite"/>
    </source>
</evidence>
<name>PP1RA_XENLA</name>
<comment type="function">
    <text evidence="2">Substrate-recognition component of the PNUTS-PP1 protein phosphatase complex, a protein phosphatase 1 (PP1) complex that promotes RNA polymerase II transcription pause-release, allowing transcription elongation. Promoter-proximal pausing by RNA polymerase II is a transcription halt following transcription initiation but prior to elongation, which acts as a checkpoint to control that transcripts are favorably configured for transcriptional elongation. The PNUTS-PP1 complex mediates the release of RNA polymerase II from promoter-proximal region of genes by catalyzing dephosphorylation of proteins involved in transcription. In some context, PPP1R10/PNUTS also acts as an inhibitor of protein phosphatase 1 (PP1) activity by preventing access to substrates.</text>
</comment>
<comment type="subunit">
    <text evidence="2">Component of the PNUTS-PP1 complex (also named PTW/PP1 complex).</text>
</comment>
<comment type="subcellular location">
    <subcellularLocation>
        <location evidence="2 3">Nucleus</location>
    </subcellularLocation>
    <subcellularLocation>
        <location evidence="2">Chromosome</location>
    </subcellularLocation>
    <text evidence="2">Found in discrete nucleoplasmic bodies and within nucleoli. Associates with RNA polymerase II (Pol II) on chromatin during pause-release checkpoint.</text>
</comment>
<comment type="domain">
    <text evidence="2">The TFIIS N-terminal domain specifically recognizes disordered sequences in protein substrates that are then dephosphorylated by PPP1CA (or PPP1CB or PPP1CC).</text>
</comment>
<proteinExistence type="evidence at transcript level"/>
<organism>
    <name type="scientific">Xenopus laevis</name>
    <name type="common">African clawed frog</name>
    <dbReference type="NCBI Taxonomy" id="8355"/>
    <lineage>
        <taxon>Eukaryota</taxon>
        <taxon>Metazoa</taxon>
        <taxon>Chordata</taxon>
        <taxon>Craniata</taxon>
        <taxon>Vertebrata</taxon>
        <taxon>Euteleostomi</taxon>
        <taxon>Amphibia</taxon>
        <taxon>Batrachia</taxon>
        <taxon>Anura</taxon>
        <taxon>Pipoidea</taxon>
        <taxon>Pipidae</taxon>
        <taxon>Xenopodinae</taxon>
        <taxon>Xenopus</taxon>
        <taxon>Xenopus</taxon>
    </lineage>
</organism>